<gene>
    <name evidence="1" type="primary">argH</name>
    <name type="ordered locus">Paes_1047</name>
</gene>
<sequence length="460" mass="52190">MSKKKELLWQSRFSEPFDREALLFSSSVDVDKELYQEDITGSIAHVTMLSEEAIIPAEEARLIIEGLQEIEEEISTGSLVPHWEDEDIHTVIENRLKEKIGPIAGKIHSGRSRNDQVATDTRLYLKRSIEEIRQALKELKTVLVDKAEAYRRTIIFGYTHLQRAQPISAGHYYLAYFNMFDRDNQRLQDLYKRVDISPLGAAAFAGSTLALNAERSRDLLEFEGLFHNSIDAVSDRDIIIEFVSACSIIMMHLSRFAEDLILWSSYEFNYLEISDAFATGSSIMPQKKNADIAELVRGKTGRVYGDLMAMLTIMKGLPLSYNRDMQEDKPPLFDASKTTRSSVRIFTKMLENTSIKENRLSSLVAKDLSLATEIAEYLVQKNMPFRDAHRVTGKIVSHVIESGTTLPDMTLETYRTFSDLFDEDLYDALKPEASVNAKKTHGSTSFASVEEQIVSARTRI</sequence>
<comment type="catalytic activity">
    <reaction evidence="1">
        <text>2-(N(omega)-L-arginino)succinate = fumarate + L-arginine</text>
        <dbReference type="Rhea" id="RHEA:24020"/>
        <dbReference type="ChEBI" id="CHEBI:29806"/>
        <dbReference type="ChEBI" id="CHEBI:32682"/>
        <dbReference type="ChEBI" id="CHEBI:57472"/>
        <dbReference type="EC" id="4.3.2.1"/>
    </reaction>
</comment>
<comment type="pathway">
    <text evidence="1">Amino-acid biosynthesis; L-arginine biosynthesis; L-arginine from L-ornithine and carbamoyl phosphate: step 3/3.</text>
</comment>
<comment type="subcellular location">
    <subcellularLocation>
        <location evidence="1">Cytoplasm</location>
    </subcellularLocation>
</comment>
<comment type="similarity">
    <text evidence="1">Belongs to the lyase 1 family. Argininosuccinate lyase subfamily.</text>
</comment>
<protein>
    <recommendedName>
        <fullName evidence="1">Argininosuccinate lyase</fullName>
        <shortName evidence="1">ASAL</shortName>
        <ecNumber evidence="1">4.3.2.1</ecNumber>
    </recommendedName>
    <alternativeName>
        <fullName evidence="1">Arginosuccinase</fullName>
    </alternativeName>
</protein>
<keyword id="KW-0028">Amino-acid biosynthesis</keyword>
<keyword id="KW-0055">Arginine biosynthesis</keyword>
<keyword id="KW-0963">Cytoplasm</keyword>
<keyword id="KW-0456">Lyase</keyword>
<dbReference type="EC" id="4.3.2.1" evidence="1"/>
<dbReference type="EMBL" id="CP001108">
    <property type="protein sequence ID" value="ACF46086.1"/>
    <property type="molecule type" value="Genomic_DNA"/>
</dbReference>
<dbReference type="RefSeq" id="WP_012505623.1">
    <property type="nucleotide sequence ID" value="NC_011059.1"/>
</dbReference>
<dbReference type="SMR" id="B4S7P9"/>
<dbReference type="STRING" id="290512.Paes_1047"/>
<dbReference type="KEGG" id="paa:Paes_1047"/>
<dbReference type="eggNOG" id="COG0165">
    <property type="taxonomic scope" value="Bacteria"/>
</dbReference>
<dbReference type="HOGENOM" id="CLU_027272_2_3_10"/>
<dbReference type="UniPathway" id="UPA00068">
    <property type="reaction ID" value="UER00114"/>
</dbReference>
<dbReference type="Proteomes" id="UP000002725">
    <property type="component" value="Chromosome"/>
</dbReference>
<dbReference type="GO" id="GO:0005829">
    <property type="term" value="C:cytosol"/>
    <property type="evidence" value="ECO:0007669"/>
    <property type="project" value="TreeGrafter"/>
</dbReference>
<dbReference type="GO" id="GO:0004056">
    <property type="term" value="F:argininosuccinate lyase activity"/>
    <property type="evidence" value="ECO:0007669"/>
    <property type="project" value="UniProtKB-UniRule"/>
</dbReference>
<dbReference type="GO" id="GO:0042450">
    <property type="term" value="P:arginine biosynthetic process via ornithine"/>
    <property type="evidence" value="ECO:0007669"/>
    <property type="project" value="InterPro"/>
</dbReference>
<dbReference type="GO" id="GO:0006526">
    <property type="term" value="P:L-arginine biosynthetic process"/>
    <property type="evidence" value="ECO:0007669"/>
    <property type="project" value="UniProtKB-UniRule"/>
</dbReference>
<dbReference type="CDD" id="cd01359">
    <property type="entry name" value="Argininosuccinate_lyase"/>
    <property type="match status" value="1"/>
</dbReference>
<dbReference type="FunFam" id="1.10.275.10:FF:000002">
    <property type="entry name" value="Argininosuccinate lyase"/>
    <property type="match status" value="1"/>
</dbReference>
<dbReference type="FunFam" id="1.10.40.30:FF:000001">
    <property type="entry name" value="Argininosuccinate lyase"/>
    <property type="match status" value="1"/>
</dbReference>
<dbReference type="FunFam" id="1.20.200.10:FF:000015">
    <property type="entry name" value="argininosuccinate lyase isoform X2"/>
    <property type="match status" value="1"/>
</dbReference>
<dbReference type="Gene3D" id="1.10.40.30">
    <property type="entry name" value="Fumarase/aspartase (C-terminal domain)"/>
    <property type="match status" value="1"/>
</dbReference>
<dbReference type="Gene3D" id="1.20.200.10">
    <property type="entry name" value="Fumarase/aspartase (Central domain)"/>
    <property type="match status" value="1"/>
</dbReference>
<dbReference type="Gene3D" id="1.10.275.10">
    <property type="entry name" value="Fumarase/aspartase (N-terminal domain)"/>
    <property type="match status" value="1"/>
</dbReference>
<dbReference type="HAMAP" id="MF_00006">
    <property type="entry name" value="Arg_succ_lyase"/>
    <property type="match status" value="1"/>
</dbReference>
<dbReference type="InterPro" id="IPR029419">
    <property type="entry name" value="Arg_succ_lyase_C"/>
</dbReference>
<dbReference type="InterPro" id="IPR009049">
    <property type="entry name" value="Argininosuccinate_lyase"/>
</dbReference>
<dbReference type="InterPro" id="IPR024083">
    <property type="entry name" value="Fumarase/histidase_N"/>
</dbReference>
<dbReference type="InterPro" id="IPR020557">
    <property type="entry name" value="Fumarate_lyase_CS"/>
</dbReference>
<dbReference type="InterPro" id="IPR000362">
    <property type="entry name" value="Fumarate_lyase_fam"/>
</dbReference>
<dbReference type="InterPro" id="IPR022761">
    <property type="entry name" value="Fumarate_lyase_N"/>
</dbReference>
<dbReference type="InterPro" id="IPR008948">
    <property type="entry name" value="L-Aspartase-like"/>
</dbReference>
<dbReference type="NCBIfam" id="TIGR00838">
    <property type="entry name" value="argH"/>
    <property type="match status" value="1"/>
</dbReference>
<dbReference type="PANTHER" id="PTHR43814">
    <property type="entry name" value="ARGININOSUCCINATE LYASE"/>
    <property type="match status" value="1"/>
</dbReference>
<dbReference type="PANTHER" id="PTHR43814:SF1">
    <property type="entry name" value="ARGININOSUCCINATE LYASE"/>
    <property type="match status" value="1"/>
</dbReference>
<dbReference type="Pfam" id="PF14698">
    <property type="entry name" value="ASL_C2"/>
    <property type="match status" value="1"/>
</dbReference>
<dbReference type="Pfam" id="PF00206">
    <property type="entry name" value="Lyase_1"/>
    <property type="match status" value="1"/>
</dbReference>
<dbReference type="PRINTS" id="PR00145">
    <property type="entry name" value="ARGSUCLYASE"/>
</dbReference>
<dbReference type="PRINTS" id="PR00149">
    <property type="entry name" value="FUMRATELYASE"/>
</dbReference>
<dbReference type="SUPFAM" id="SSF48557">
    <property type="entry name" value="L-aspartase-like"/>
    <property type="match status" value="1"/>
</dbReference>
<dbReference type="PROSITE" id="PS00163">
    <property type="entry name" value="FUMARATE_LYASES"/>
    <property type="match status" value="1"/>
</dbReference>
<reference key="1">
    <citation type="submission" date="2008-06" db="EMBL/GenBank/DDBJ databases">
        <title>Complete sequence of chromosome of Prosthecochloris aestuarii DSM 271.</title>
        <authorList>
            <consortium name="US DOE Joint Genome Institute"/>
            <person name="Lucas S."/>
            <person name="Copeland A."/>
            <person name="Lapidus A."/>
            <person name="Glavina del Rio T."/>
            <person name="Dalin E."/>
            <person name="Tice H."/>
            <person name="Bruce D."/>
            <person name="Goodwin L."/>
            <person name="Pitluck S."/>
            <person name="Schmutz J."/>
            <person name="Larimer F."/>
            <person name="Land M."/>
            <person name="Hauser L."/>
            <person name="Kyrpides N."/>
            <person name="Anderson I."/>
            <person name="Liu Z."/>
            <person name="Li T."/>
            <person name="Zhao F."/>
            <person name="Overmann J."/>
            <person name="Bryant D.A."/>
            <person name="Richardson P."/>
        </authorList>
    </citation>
    <scope>NUCLEOTIDE SEQUENCE [LARGE SCALE GENOMIC DNA]</scope>
    <source>
        <strain>DSM 271 / SK 413</strain>
    </source>
</reference>
<feature type="chain" id="PRO_1000089100" description="Argininosuccinate lyase">
    <location>
        <begin position="1"/>
        <end position="460"/>
    </location>
</feature>
<accession>B4S7P9</accession>
<organism>
    <name type="scientific">Prosthecochloris aestuarii (strain DSM 271 / SK 413)</name>
    <dbReference type="NCBI Taxonomy" id="290512"/>
    <lineage>
        <taxon>Bacteria</taxon>
        <taxon>Pseudomonadati</taxon>
        <taxon>Chlorobiota</taxon>
        <taxon>Chlorobiia</taxon>
        <taxon>Chlorobiales</taxon>
        <taxon>Chlorobiaceae</taxon>
        <taxon>Prosthecochloris</taxon>
    </lineage>
</organism>
<name>ARLY_PROA2</name>
<proteinExistence type="inferred from homology"/>
<evidence type="ECO:0000255" key="1">
    <source>
        <dbReference type="HAMAP-Rule" id="MF_00006"/>
    </source>
</evidence>